<sequence length="512" mass="55455">MPAASDRETDVVLIGAGIMSATLGAFLKELEPSLTIQMLETLDDCAQESSDSWNNAGTGHAANCEMNYTPQRPDGSIDISKALQVNVEFDLSRQFWSYLIGRGAIADPRSFIHPVPHMSFVHGTENVEFLRKRFKAMSAHHCYEGMEHTEDPRKIAEWAPLVMDGRSGDEPVAATRIITGTDVDYGALTHLLVGHLVSQPGCAVHYNSCVTGLVREQGGRWRIEVRDTASGETRSVRAKFVFIGAGGGALPLLEKSGLPEARGYGGFPVSGIWLRCDDPEINKRHHAKVYGKAAVGSPPMSVPHLDTRVIGGKHSLLFGPYAGFSSKFLKHGSLLDLFESIRPANVKPLLSVARDNFDLTEYLVGQVLQSESHRLAALDEYFPKADPKDWRLQVAGQRVQIIKPDVKRGGLLEFGTELVGADDHSLVALLGASPGASTAAFIAISVLEKCFAGELTASAWLPKLKQIVPSYGVSLIDDADFCRQIRATTAEVLKVDNIPQPAARAPAAAKRA</sequence>
<feature type="chain" id="PRO_0000128707" description="Probable malate:quinone oxidoreductase">
    <location>
        <begin position="1"/>
        <end position="512"/>
    </location>
</feature>
<protein>
    <recommendedName>
        <fullName evidence="1">Probable malate:quinone oxidoreductase</fullName>
        <ecNumber evidence="1">1.1.5.4</ecNumber>
    </recommendedName>
    <alternativeName>
        <fullName evidence="1">MQO</fullName>
    </alternativeName>
    <alternativeName>
        <fullName evidence="1">Malate dehydrogenase [quinone]</fullName>
    </alternativeName>
</protein>
<comment type="catalytic activity">
    <reaction evidence="1">
        <text>(S)-malate + a quinone = a quinol + oxaloacetate</text>
        <dbReference type="Rhea" id="RHEA:46012"/>
        <dbReference type="ChEBI" id="CHEBI:15589"/>
        <dbReference type="ChEBI" id="CHEBI:16452"/>
        <dbReference type="ChEBI" id="CHEBI:24646"/>
        <dbReference type="ChEBI" id="CHEBI:132124"/>
        <dbReference type="EC" id="1.1.5.4"/>
    </reaction>
</comment>
<comment type="cofactor">
    <cofactor evidence="1">
        <name>FAD</name>
        <dbReference type="ChEBI" id="CHEBI:57692"/>
    </cofactor>
</comment>
<comment type="pathway">
    <text evidence="1">Carbohydrate metabolism; tricarboxylic acid cycle; oxaloacetate from (S)-malate (quinone route): step 1/1.</text>
</comment>
<comment type="similarity">
    <text evidence="1">Belongs to the MQO family.</text>
</comment>
<proteinExistence type="inferred from homology"/>
<dbReference type="EC" id="1.1.5.4" evidence="1"/>
<dbReference type="EMBL" id="BA000040">
    <property type="protein sequence ID" value="BAC45549.1"/>
    <property type="molecule type" value="Genomic_DNA"/>
</dbReference>
<dbReference type="RefSeq" id="NP_766924.1">
    <property type="nucleotide sequence ID" value="NC_004463.1"/>
</dbReference>
<dbReference type="RefSeq" id="WP_011083116.1">
    <property type="nucleotide sequence ID" value="NC_004463.1"/>
</dbReference>
<dbReference type="SMR" id="Q89XM4"/>
<dbReference type="FunCoup" id="Q89XM4">
    <property type="interactions" value="185"/>
</dbReference>
<dbReference type="STRING" id="224911.AAV28_40660"/>
<dbReference type="EnsemblBacteria" id="BAC45549">
    <property type="protein sequence ID" value="BAC45549"/>
    <property type="gene ID" value="BAC45549"/>
</dbReference>
<dbReference type="GeneID" id="46495434"/>
<dbReference type="KEGG" id="bja:bll0284"/>
<dbReference type="PATRIC" id="fig|224911.44.peg.8804"/>
<dbReference type="eggNOG" id="COG0579">
    <property type="taxonomic scope" value="Bacteria"/>
</dbReference>
<dbReference type="HOGENOM" id="CLU_028151_0_0_5"/>
<dbReference type="InParanoid" id="Q89XM4"/>
<dbReference type="OrthoDB" id="9763983at2"/>
<dbReference type="PhylomeDB" id="Q89XM4"/>
<dbReference type="UniPathway" id="UPA00223">
    <property type="reaction ID" value="UER01008"/>
</dbReference>
<dbReference type="Proteomes" id="UP000002526">
    <property type="component" value="Chromosome"/>
</dbReference>
<dbReference type="GO" id="GO:0005737">
    <property type="term" value="C:cytoplasm"/>
    <property type="evidence" value="ECO:0000318"/>
    <property type="project" value="GO_Central"/>
</dbReference>
<dbReference type="GO" id="GO:0008924">
    <property type="term" value="F:L-malate dehydrogenase (quinone) activity"/>
    <property type="evidence" value="ECO:0007669"/>
    <property type="project" value="UniProtKB-UniRule"/>
</dbReference>
<dbReference type="GO" id="GO:0006099">
    <property type="term" value="P:tricarboxylic acid cycle"/>
    <property type="evidence" value="ECO:0007669"/>
    <property type="project" value="UniProtKB-UniRule"/>
</dbReference>
<dbReference type="Gene3D" id="3.30.9.10">
    <property type="entry name" value="D-Amino Acid Oxidase, subunit A, domain 2"/>
    <property type="match status" value="1"/>
</dbReference>
<dbReference type="Gene3D" id="3.50.50.60">
    <property type="entry name" value="FAD/NAD(P)-binding domain"/>
    <property type="match status" value="1"/>
</dbReference>
<dbReference type="HAMAP" id="MF_00212">
    <property type="entry name" value="MQO"/>
    <property type="match status" value="1"/>
</dbReference>
<dbReference type="InterPro" id="IPR036188">
    <property type="entry name" value="FAD/NAD-bd_sf"/>
</dbReference>
<dbReference type="InterPro" id="IPR006231">
    <property type="entry name" value="MQO"/>
</dbReference>
<dbReference type="NCBIfam" id="TIGR01320">
    <property type="entry name" value="mal_quin_oxido"/>
    <property type="match status" value="1"/>
</dbReference>
<dbReference type="NCBIfam" id="NF003603">
    <property type="entry name" value="PRK05257.1-1"/>
    <property type="match status" value="1"/>
</dbReference>
<dbReference type="NCBIfam" id="NF003605">
    <property type="entry name" value="PRK05257.1-4"/>
    <property type="match status" value="1"/>
</dbReference>
<dbReference type="NCBIfam" id="NF003606">
    <property type="entry name" value="PRK05257.2-1"/>
    <property type="match status" value="1"/>
</dbReference>
<dbReference type="NCBIfam" id="NF003608">
    <property type="entry name" value="PRK05257.2-4"/>
    <property type="match status" value="1"/>
</dbReference>
<dbReference type="NCBIfam" id="NF003611">
    <property type="entry name" value="PRK05257.3-2"/>
    <property type="match status" value="1"/>
</dbReference>
<dbReference type="NCBIfam" id="NF009875">
    <property type="entry name" value="PRK13339.1"/>
    <property type="match status" value="1"/>
</dbReference>
<dbReference type="PANTHER" id="PTHR43104">
    <property type="entry name" value="L-2-HYDROXYGLUTARATE DEHYDROGENASE, MITOCHONDRIAL"/>
    <property type="match status" value="1"/>
</dbReference>
<dbReference type="PANTHER" id="PTHR43104:SF2">
    <property type="entry name" value="L-2-HYDROXYGLUTARATE DEHYDROGENASE, MITOCHONDRIAL"/>
    <property type="match status" value="1"/>
</dbReference>
<dbReference type="Pfam" id="PF06039">
    <property type="entry name" value="Mqo"/>
    <property type="match status" value="1"/>
</dbReference>
<dbReference type="SUPFAM" id="SSF51905">
    <property type="entry name" value="FAD/NAD(P)-binding domain"/>
    <property type="match status" value="1"/>
</dbReference>
<organism>
    <name type="scientific">Bradyrhizobium diazoefficiens (strain JCM 10833 / BCRC 13528 / IAM 13628 / NBRC 14792 / USDA 110)</name>
    <dbReference type="NCBI Taxonomy" id="224911"/>
    <lineage>
        <taxon>Bacteria</taxon>
        <taxon>Pseudomonadati</taxon>
        <taxon>Pseudomonadota</taxon>
        <taxon>Alphaproteobacteria</taxon>
        <taxon>Hyphomicrobiales</taxon>
        <taxon>Nitrobacteraceae</taxon>
        <taxon>Bradyrhizobium</taxon>
    </lineage>
</organism>
<evidence type="ECO:0000255" key="1">
    <source>
        <dbReference type="HAMAP-Rule" id="MF_00212"/>
    </source>
</evidence>
<keyword id="KW-0274">FAD</keyword>
<keyword id="KW-0285">Flavoprotein</keyword>
<keyword id="KW-0560">Oxidoreductase</keyword>
<keyword id="KW-1185">Reference proteome</keyword>
<keyword id="KW-0816">Tricarboxylic acid cycle</keyword>
<name>MQO_BRADU</name>
<gene>
    <name evidence="1" type="primary">mqo</name>
    <name type="ordered locus">bll0284</name>
</gene>
<accession>Q89XM4</accession>
<reference key="1">
    <citation type="journal article" date="2002" name="DNA Res.">
        <title>Complete genomic sequence of nitrogen-fixing symbiotic bacterium Bradyrhizobium japonicum USDA110.</title>
        <authorList>
            <person name="Kaneko T."/>
            <person name="Nakamura Y."/>
            <person name="Sato S."/>
            <person name="Minamisawa K."/>
            <person name="Uchiumi T."/>
            <person name="Sasamoto S."/>
            <person name="Watanabe A."/>
            <person name="Idesawa K."/>
            <person name="Iriguchi M."/>
            <person name="Kawashima K."/>
            <person name="Kohara M."/>
            <person name="Matsumoto M."/>
            <person name="Shimpo S."/>
            <person name="Tsuruoka H."/>
            <person name="Wada T."/>
            <person name="Yamada M."/>
            <person name="Tabata S."/>
        </authorList>
    </citation>
    <scope>NUCLEOTIDE SEQUENCE [LARGE SCALE GENOMIC DNA]</scope>
    <source>
        <strain>JCM 10833 / BCRC 13528 / IAM 13628 / NBRC 14792 / USDA 110</strain>
    </source>
</reference>